<reference key="1">
    <citation type="journal article" date="2005" name="J. Bacteriol.">
        <title>Genomic sequence of an otitis media isolate of nontypeable Haemophilus influenzae: comparative study with H. influenzae serotype d, strain KW20.</title>
        <authorList>
            <person name="Harrison A."/>
            <person name="Dyer D.W."/>
            <person name="Gillaspy A."/>
            <person name="Ray W.C."/>
            <person name="Mungur R."/>
            <person name="Carson M.B."/>
            <person name="Zhong H."/>
            <person name="Gipson J."/>
            <person name="Gipson M."/>
            <person name="Johnson L.S."/>
            <person name="Lewis L."/>
            <person name="Bakaletz L.O."/>
            <person name="Munson R.S. Jr."/>
        </authorList>
    </citation>
    <scope>NUCLEOTIDE SEQUENCE [LARGE SCALE GENOMIC DNA]</scope>
    <source>
        <strain>86-028NP</strain>
    </source>
</reference>
<sequence length="88" mass="9860">MARVTVQDAVEKIGNRFDLILTAARRARQLQLNQSAPLVPEDNDKPTVIALREIEKGLINQDIMDAQEFQKMAKVQETEEAAVALITE</sequence>
<proteinExistence type="inferred from homology"/>
<comment type="function">
    <text evidence="1">Promotes RNA polymerase assembly. Latches the N- and C-terminal regions of the beta' subunit thereby facilitating its interaction with the beta and alpha subunits.</text>
</comment>
<comment type="catalytic activity">
    <reaction evidence="1">
        <text>RNA(n) + a ribonucleoside 5'-triphosphate = RNA(n+1) + diphosphate</text>
        <dbReference type="Rhea" id="RHEA:21248"/>
        <dbReference type="Rhea" id="RHEA-COMP:14527"/>
        <dbReference type="Rhea" id="RHEA-COMP:17342"/>
        <dbReference type="ChEBI" id="CHEBI:33019"/>
        <dbReference type="ChEBI" id="CHEBI:61557"/>
        <dbReference type="ChEBI" id="CHEBI:140395"/>
        <dbReference type="EC" id="2.7.7.6"/>
    </reaction>
</comment>
<comment type="subunit">
    <text evidence="1">The RNAP catalytic core consists of 2 alpha, 1 beta, 1 beta' and 1 omega subunit. When a sigma factor is associated with the core the holoenzyme is formed, which can initiate transcription.</text>
</comment>
<comment type="similarity">
    <text evidence="1">Belongs to the RNA polymerase subunit omega family.</text>
</comment>
<feature type="chain" id="PRO_0000237464" description="DNA-directed RNA polymerase subunit omega">
    <location>
        <begin position="1"/>
        <end position="88"/>
    </location>
</feature>
<accession>Q4QJK4</accession>
<dbReference type="EC" id="2.7.7.6" evidence="1"/>
<dbReference type="EMBL" id="CP000057">
    <property type="protein sequence ID" value="AAX88793.1"/>
    <property type="molecule type" value="Genomic_DNA"/>
</dbReference>
<dbReference type="RefSeq" id="WP_005693900.1">
    <property type="nucleotide sequence ID" value="NC_007146.2"/>
</dbReference>
<dbReference type="SMR" id="Q4QJK4"/>
<dbReference type="GeneID" id="93220755"/>
<dbReference type="KEGG" id="hit:NTHI2053"/>
<dbReference type="HOGENOM" id="CLU_125406_5_3_6"/>
<dbReference type="Proteomes" id="UP000002525">
    <property type="component" value="Chromosome"/>
</dbReference>
<dbReference type="GO" id="GO:0000428">
    <property type="term" value="C:DNA-directed RNA polymerase complex"/>
    <property type="evidence" value="ECO:0007669"/>
    <property type="project" value="UniProtKB-KW"/>
</dbReference>
<dbReference type="GO" id="GO:0003677">
    <property type="term" value="F:DNA binding"/>
    <property type="evidence" value="ECO:0007669"/>
    <property type="project" value="UniProtKB-UniRule"/>
</dbReference>
<dbReference type="GO" id="GO:0003899">
    <property type="term" value="F:DNA-directed RNA polymerase activity"/>
    <property type="evidence" value="ECO:0007669"/>
    <property type="project" value="UniProtKB-UniRule"/>
</dbReference>
<dbReference type="GO" id="GO:0006351">
    <property type="term" value="P:DNA-templated transcription"/>
    <property type="evidence" value="ECO:0007669"/>
    <property type="project" value="UniProtKB-UniRule"/>
</dbReference>
<dbReference type="Gene3D" id="3.90.940.10">
    <property type="match status" value="1"/>
</dbReference>
<dbReference type="HAMAP" id="MF_00366">
    <property type="entry name" value="RNApol_bact_RpoZ"/>
    <property type="match status" value="1"/>
</dbReference>
<dbReference type="InterPro" id="IPR003716">
    <property type="entry name" value="DNA-dir_RNA_pol_omega"/>
</dbReference>
<dbReference type="InterPro" id="IPR006110">
    <property type="entry name" value="Pol_omega/Rpo6/RPB6"/>
</dbReference>
<dbReference type="InterPro" id="IPR036161">
    <property type="entry name" value="RPB6/omega-like_sf"/>
</dbReference>
<dbReference type="NCBIfam" id="TIGR00690">
    <property type="entry name" value="rpoZ"/>
    <property type="match status" value="1"/>
</dbReference>
<dbReference type="PANTHER" id="PTHR34476">
    <property type="entry name" value="DNA-DIRECTED RNA POLYMERASE SUBUNIT OMEGA"/>
    <property type="match status" value="1"/>
</dbReference>
<dbReference type="PANTHER" id="PTHR34476:SF1">
    <property type="entry name" value="DNA-DIRECTED RNA POLYMERASE SUBUNIT OMEGA"/>
    <property type="match status" value="1"/>
</dbReference>
<dbReference type="Pfam" id="PF01192">
    <property type="entry name" value="RNA_pol_Rpb6"/>
    <property type="match status" value="1"/>
</dbReference>
<dbReference type="SMART" id="SM01409">
    <property type="entry name" value="RNA_pol_Rpb6"/>
    <property type="match status" value="1"/>
</dbReference>
<dbReference type="SUPFAM" id="SSF63562">
    <property type="entry name" value="RPB6/omega subunit-like"/>
    <property type="match status" value="1"/>
</dbReference>
<gene>
    <name evidence="1" type="primary">rpoZ</name>
    <name type="ordered locus">NTHI2053</name>
</gene>
<name>RPOZ_HAEI8</name>
<evidence type="ECO:0000255" key="1">
    <source>
        <dbReference type="HAMAP-Rule" id="MF_00366"/>
    </source>
</evidence>
<keyword id="KW-0240">DNA-directed RNA polymerase</keyword>
<keyword id="KW-0548">Nucleotidyltransferase</keyword>
<keyword id="KW-0804">Transcription</keyword>
<keyword id="KW-0808">Transferase</keyword>
<organism>
    <name type="scientific">Haemophilus influenzae (strain 86-028NP)</name>
    <dbReference type="NCBI Taxonomy" id="281310"/>
    <lineage>
        <taxon>Bacteria</taxon>
        <taxon>Pseudomonadati</taxon>
        <taxon>Pseudomonadota</taxon>
        <taxon>Gammaproteobacteria</taxon>
        <taxon>Pasteurellales</taxon>
        <taxon>Pasteurellaceae</taxon>
        <taxon>Haemophilus</taxon>
    </lineage>
</organism>
<protein>
    <recommendedName>
        <fullName evidence="1">DNA-directed RNA polymerase subunit omega</fullName>
        <shortName evidence="1">RNAP omega subunit</shortName>
        <ecNumber evidence="1">2.7.7.6</ecNumber>
    </recommendedName>
    <alternativeName>
        <fullName evidence="1">RNA polymerase omega subunit</fullName>
    </alternativeName>
    <alternativeName>
        <fullName evidence="1">Transcriptase subunit omega</fullName>
    </alternativeName>
</protein>